<dbReference type="EMBL" id="AJ271208">
    <property type="protein sequence ID" value="CAC81053.1"/>
    <property type="molecule type" value="mRNA"/>
</dbReference>
<dbReference type="RefSeq" id="NP_001105130.1">
    <property type="nucleotide sequence ID" value="NM_001111660.1"/>
</dbReference>
<dbReference type="SMR" id="Q8VWM8"/>
<dbReference type="FunCoup" id="Q8VWM8">
    <property type="interactions" value="35"/>
</dbReference>
<dbReference type="STRING" id="4577.Q8VWM8"/>
<dbReference type="PaxDb" id="4577-GRMZM2G130382_P01"/>
<dbReference type="EnsemblPlants" id="Zm00001eb233110_T001">
    <property type="protein sequence ID" value="Zm00001eb233110_P001"/>
    <property type="gene ID" value="Zm00001eb233110"/>
</dbReference>
<dbReference type="EnsemblPlants" id="Zm00001eb233110_T003">
    <property type="protein sequence ID" value="Zm00001eb233110_P003"/>
    <property type="gene ID" value="Zm00001eb233110"/>
</dbReference>
<dbReference type="GeneID" id="542013"/>
<dbReference type="Gramene" id="Zm00001eb233110_T001">
    <property type="protein sequence ID" value="Zm00001eb233110_P001"/>
    <property type="gene ID" value="Zm00001eb233110"/>
</dbReference>
<dbReference type="Gramene" id="Zm00001eb233110_T003">
    <property type="protein sequence ID" value="Zm00001eb233110_P003"/>
    <property type="gene ID" value="Zm00001eb233110"/>
</dbReference>
<dbReference type="KEGG" id="zma:542013"/>
<dbReference type="InParanoid" id="Q8VWM8"/>
<dbReference type="OMA" id="FTHSTYY"/>
<dbReference type="OrthoDB" id="1898716at2759"/>
<dbReference type="Proteomes" id="UP000007305">
    <property type="component" value="Chromosome 5"/>
</dbReference>
<dbReference type="ExpressionAtlas" id="Q8VWM8">
    <property type="expression patterns" value="baseline and differential"/>
</dbReference>
<dbReference type="GO" id="GO:0005634">
    <property type="term" value="C:nucleus"/>
    <property type="evidence" value="ECO:0007669"/>
    <property type="project" value="UniProtKB-SubCell"/>
</dbReference>
<dbReference type="GO" id="GO:0000981">
    <property type="term" value="F:DNA-binding transcription factor activity, RNA polymerase II-specific"/>
    <property type="evidence" value="ECO:0000318"/>
    <property type="project" value="GO_Central"/>
</dbReference>
<dbReference type="GO" id="GO:0046983">
    <property type="term" value="F:protein dimerization activity"/>
    <property type="evidence" value="ECO:0007669"/>
    <property type="project" value="InterPro"/>
</dbReference>
<dbReference type="GO" id="GO:0000978">
    <property type="term" value="F:RNA polymerase II cis-regulatory region sequence-specific DNA binding"/>
    <property type="evidence" value="ECO:0000318"/>
    <property type="project" value="GO_Central"/>
</dbReference>
<dbReference type="GO" id="GO:0045944">
    <property type="term" value="P:positive regulation of transcription by RNA polymerase II"/>
    <property type="evidence" value="ECO:0007669"/>
    <property type="project" value="InterPro"/>
</dbReference>
<dbReference type="GO" id="GO:0006357">
    <property type="term" value="P:regulation of transcription by RNA polymerase II"/>
    <property type="evidence" value="ECO:0000318"/>
    <property type="project" value="GO_Central"/>
</dbReference>
<dbReference type="CDD" id="cd00265">
    <property type="entry name" value="MADS_MEF2_like"/>
    <property type="match status" value="1"/>
</dbReference>
<dbReference type="FunFam" id="3.40.1810.10:FF:000026">
    <property type="entry name" value="MADS-box transcription factor 29"/>
    <property type="match status" value="1"/>
</dbReference>
<dbReference type="Gene3D" id="3.40.1810.10">
    <property type="entry name" value="Transcription factor, MADS-box"/>
    <property type="match status" value="1"/>
</dbReference>
<dbReference type="InterPro" id="IPR050142">
    <property type="entry name" value="MADS-box/MEF2_TF"/>
</dbReference>
<dbReference type="InterPro" id="IPR033896">
    <property type="entry name" value="MEF2-like_N"/>
</dbReference>
<dbReference type="InterPro" id="IPR002487">
    <property type="entry name" value="TF_Kbox"/>
</dbReference>
<dbReference type="InterPro" id="IPR002100">
    <property type="entry name" value="TF_MADSbox"/>
</dbReference>
<dbReference type="InterPro" id="IPR036879">
    <property type="entry name" value="TF_MADSbox_sf"/>
</dbReference>
<dbReference type="PANTHER" id="PTHR48019">
    <property type="entry name" value="SERUM RESPONSE FACTOR HOMOLOG"/>
    <property type="match status" value="1"/>
</dbReference>
<dbReference type="Pfam" id="PF01486">
    <property type="entry name" value="K-box"/>
    <property type="match status" value="1"/>
</dbReference>
<dbReference type="Pfam" id="PF00319">
    <property type="entry name" value="SRF-TF"/>
    <property type="match status" value="1"/>
</dbReference>
<dbReference type="PRINTS" id="PR00404">
    <property type="entry name" value="MADSDOMAIN"/>
</dbReference>
<dbReference type="SMART" id="SM00432">
    <property type="entry name" value="MADS"/>
    <property type="match status" value="1"/>
</dbReference>
<dbReference type="SUPFAM" id="SSF55455">
    <property type="entry name" value="SRF-like"/>
    <property type="match status" value="1"/>
</dbReference>
<dbReference type="PROSITE" id="PS51297">
    <property type="entry name" value="K_BOX"/>
    <property type="match status" value="1"/>
</dbReference>
<dbReference type="PROSITE" id="PS00350">
    <property type="entry name" value="MADS_BOX_1"/>
    <property type="match status" value="1"/>
</dbReference>
<dbReference type="PROSITE" id="PS50066">
    <property type="entry name" value="MADS_BOX_2"/>
    <property type="match status" value="1"/>
</dbReference>
<accession>Q8VWM8</accession>
<feature type="chain" id="PRO_0000199498" description="MADS-box protein ZMM17">
    <location>
        <begin position="1"/>
        <end position="259"/>
    </location>
</feature>
<feature type="domain" description="MADS-box" evidence="1">
    <location>
        <begin position="1"/>
        <end position="61"/>
    </location>
</feature>
<feature type="domain" description="K-box" evidence="2">
    <location>
        <begin position="85"/>
        <end position="175"/>
    </location>
</feature>
<feature type="region of interest" description="Disordered" evidence="3">
    <location>
        <begin position="237"/>
        <end position="259"/>
    </location>
</feature>
<sequence length="259" mass="29001">MGRGKIEIKRIENSTNRQVTFSKRRGGLLKKANELAVLCDARVGVVIFSSTGKMFEYCSPACSLRELIEQYQHATNSHFEEINHDQQILLEMTRMKNEMEKLETGIRRYTGDDLSSLTLDDVSDLEQQLEYSVSKVRARKHQLLNQQLDNLRRKEQILEDQNTFLYRMINENQQAALTGEVKLGEMAPLAMLQPPPAFAHSATAYYGGESSSSGTALQLMSAAPQLHADDLGFRLQPTQPNLQDPAAPCGGLHGHGLQL</sequence>
<proteinExistence type="evidence at transcript level"/>
<reference key="1">
    <citation type="journal article" date="2002" name="Mol. Genet. Genomics">
        <title>A novel MADS-box gene subfamily with sistergroup relationship to class B floral homeotic genes.</title>
        <authorList>
            <person name="Becker A."/>
            <person name="Kaufmann K."/>
            <person name="Freialdenhoven A."/>
            <person name="Vincent C."/>
            <person name="Li M.-A."/>
            <person name="Saedler H."/>
            <person name="Theissen G."/>
        </authorList>
    </citation>
    <scope>NUCLEOTIDE SEQUENCE [MRNA]</scope>
    <source>
        <strain>cv. Tennessee 232</strain>
        <tissue>Flower</tissue>
    </source>
</reference>
<evidence type="ECO:0000255" key="1">
    <source>
        <dbReference type="PROSITE-ProRule" id="PRU00251"/>
    </source>
</evidence>
<evidence type="ECO:0000255" key="2">
    <source>
        <dbReference type="PROSITE-ProRule" id="PRU00629"/>
    </source>
</evidence>
<evidence type="ECO:0000256" key="3">
    <source>
        <dbReference type="SAM" id="MobiDB-lite"/>
    </source>
</evidence>
<gene>
    <name type="primary">M17</name>
</gene>
<name>M17_MAIZE</name>
<keyword id="KW-0238">DNA-binding</keyword>
<keyword id="KW-0539">Nucleus</keyword>
<keyword id="KW-1185">Reference proteome</keyword>
<keyword id="KW-0804">Transcription</keyword>
<keyword id="KW-0805">Transcription regulation</keyword>
<comment type="function">
    <text>Probable transcription factor.</text>
</comment>
<comment type="subcellular location">
    <subcellularLocation>
        <location evidence="1">Nucleus</location>
    </subcellularLocation>
</comment>
<comment type="tissue specificity">
    <text>Strong expression in female inflorescences (ears), but also weak expression in male inflorescences (tassels). At early stages of the development of the female spiklet, expressed in all organ primordia but later restricted to the ovule and the developing silk. At very late stages of development, expression becomes restricted to parts of the silk.</text>
</comment>
<organism>
    <name type="scientific">Zea mays</name>
    <name type="common">Maize</name>
    <dbReference type="NCBI Taxonomy" id="4577"/>
    <lineage>
        <taxon>Eukaryota</taxon>
        <taxon>Viridiplantae</taxon>
        <taxon>Streptophyta</taxon>
        <taxon>Embryophyta</taxon>
        <taxon>Tracheophyta</taxon>
        <taxon>Spermatophyta</taxon>
        <taxon>Magnoliopsida</taxon>
        <taxon>Liliopsida</taxon>
        <taxon>Poales</taxon>
        <taxon>Poaceae</taxon>
        <taxon>PACMAD clade</taxon>
        <taxon>Panicoideae</taxon>
        <taxon>Andropogonodae</taxon>
        <taxon>Andropogoneae</taxon>
        <taxon>Tripsacinae</taxon>
        <taxon>Zea</taxon>
    </lineage>
</organism>
<protein>
    <recommendedName>
        <fullName>MADS-box protein ZMM17</fullName>
    </recommendedName>
</protein>